<accession>A1EA35</accession>
<protein>
    <recommendedName>
        <fullName evidence="1">Photosystem II reaction center protein T</fullName>
        <shortName evidence="1">PSII-T</shortName>
    </recommendedName>
</protein>
<comment type="function">
    <text evidence="1">Found at the monomer-monomer interface of the photosystem II (PS II) dimer, plays a role in assembly and dimerization of PSII. PSII is a light-driven water plastoquinone oxidoreductase, using light energy to abstract electrons from H(2)O, generating a proton gradient subsequently used for ATP formation.</text>
</comment>
<comment type="subunit">
    <text evidence="1">PSII is composed of 1 copy each of membrane proteins PsbA, PsbB, PsbC, PsbD, PsbE, PsbF, PsbH, PsbI, PsbJ, PsbK, PsbL, PsbM, PsbT, PsbY, PsbZ, Psb30/Ycf12, at least 3 peripheral proteins of the oxygen-evolving complex and a large number of cofactors. It forms dimeric complexes.</text>
</comment>
<comment type="subcellular location">
    <subcellularLocation>
        <location evidence="1">Plastid</location>
        <location evidence="1">Chloroplast thylakoid membrane</location>
        <topology evidence="1">Single-pass membrane protein</topology>
    </subcellularLocation>
</comment>
<comment type="similarity">
    <text evidence="1">Belongs to the PsbT family.</text>
</comment>
<dbReference type="EMBL" id="EF115543">
    <property type="protein sequence ID" value="ABK79606.1"/>
    <property type="molecule type" value="Genomic_DNA"/>
</dbReference>
<dbReference type="RefSeq" id="YP_874763.1">
    <property type="nucleotide sequence ID" value="NC_008591.1"/>
</dbReference>
<dbReference type="SMR" id="A1EA35"/>
<dbReference type="GeneID" id="4525008"/>
<dbReference type="GO" id="GO:0009535">
    <property type="term" value="C:chloroplast thylakoid membrane"/>
    <property type="evidence" value="ECO:0007669"/>
    <property type="project" value="UniProtKB-SubCell"/>
</dbReference>
<dbReference type="GO" id="GO:0009539">
    <property type="term" value="C:photosystem II reaction center"/>
    <property type="evidence" value="ECO:0007669"/>
    <property type="project" value="InterPro"/>
</dbReference>
<dbReference type="GO" id="GO:0015979">
    <property type="term" value="P:photosynthesis"/>
    <property type="evidence" value="ECO:0007669"/>
    <property type="project" value="UniProtKB-UniRule"/>
</dbReference>
<dbReference type="HAMAP" id="MF_00808">
    <property type="entry name" value="PSII_PsbT"/>
    <property type="match status" value="1"/>
</dbReference>
<dbReference type="InterPro" id="IPR001743">
    <property type="entry name" value="PSII_PsbT"/>
</dbReference>
<dbReference type="InterPro" id="IPR037268">
    <property type="entry name" value="PSII_PsbT_sf"/>
</dbReference>
<dbReference type="PANTHER" id="PTHR36411">
    <property type="match status" value="1"/>
</dbReference>
<dbReference type="PANTHER" id="PTHR36411:SF2">
    <property type="entry name" value="PHOTOSYSTEM II REACTION CENTER PROTEIN T"/>
    <property type="match status" value="1"/>
</dbReference>
<dbReference type="Pfam" id="PF01405">
    <property type="entry name" value="PsbT"/>
    <property type="match status" value="1"/>
</dbReference>
<dbReference type="SUPFAM" id="SSF161029">
    <property type="entry name" value="Photosystem II reaction center protein T, PsbT"/>
    <property type="match status" value="1"/>
</dbReference>
<organism>
    <name type="scientific">Agrostis stolonifera</name>
    <name type="common">Creeping bentgrass</name>
    <dbReference type="NCBI Taxonomy" id="63632"/>
    <lineage>
        <taxon>Eukaryota</taxon>
        <taxon>Viridiplantae</taxon>
        <taxon>Streptophyta</taxon>
        <taxon>Embryophyta</taxon>
        <taxon>Tracheophyta</taxon>
        <taxon>Spermatophyta</taxon>
        <taxon>Magnoliopsida</taxon>
        <taxon>Liliopsida</taxon>
        <taxon>Poales</taxon>
        <taxon>Poaceae</taxon>
        <taxon>BOP clade</taxon>
        <taxon>Pooideae</taxon>
        <taxon>Poodae</taxon>
        <taxon>Poeae</taxon>
        <taxon>Poeae Chloroplast Group 1 (Aveneae type)</taxon>
        <taxon>Agrostidodinae</taxon>
        <taxon>Agrostidinae</taxon>
        <taxon>Agrostis</taxon>
    </lineage>
</organism>
<feature type="chain" id="PRO_0000276287" description="Photosystem II reaction center protein T">
    <location>
        <begin position="1"/>
        <end position="38"/>
    </location>
</feature>
<feature type="transmembrane region" description="Helical" evidence="1">
    <location>
        <begin position="3"/>
        <end position="23"/>
    </location>
</feature>
<reference key="1">
    <citation type="journal article" date="2007" name="Theor. Appl. Genet.">
        <title>Complete chloroplast genome sequences of Hordeum vulgare, Sorghum bicolor and Agrostis stolonifera, and comparative analyses with other grass genomes.</title>
        <authorList>
            <person name="Saski C."/>
            <person name="Lee S.-B."/>
            <person name="Fjellheim S."/>
            <person name="Guda C."/>
            <person name="Jansen R.K."/>
            <person name="Luo H."/>
            <person name="Tomkins J."/>
            <person name="Rognli O.A."/>
            <person name="Daniell H."/>
            <person name="Clarke J.L."/>
        </authorList>
    </citation>
    <scope>NUCLEOTIDE SEQUENCE [LARGE SCALE GENOMIC DNA]</scope>
    <source>
        <strain>cv. Penn A-4</strain>
    </source>
</reference>
<gene>
    <name evidence="1" type="primary">psbT</name>
</gene>
<evidence type="ECO:0000255" key="1">
    <source>
        <dbReference type="HAMAP-Rule" id="MF_00808"/>
    </source>
</evidence>
<proteinExistence type="inferred from homology"/>
<name>PSBT_AGRST</name>
<keyword id="KW-0150">Chloroplast</keyword>
<keyword id="KW-0472">Membrane</keyword>
<keyword id="KW-0602">Photosynthesis</keyword>
<keyword id="KW-0604">Photosystem II</keyword>
<keyword id="KW-0934">Plastid</keyword>
<keyword id="KW-0793">Thylakoid</keyword>
<keyword id="KW-0812">Transmembrane</keyword>
<keyword id="KW-1133">Transmembrane helix</keyword>
<geneLocation type="chloroplast"/>
<sequence length="38" mass="4382">MEALVYTFLLVSTLGIIFFAIFFREPPKVPPTPTKRIK</sequence>